<organism>
    <name type="scientific">Ectopseudomonas mendocina (strain ymp)</name>
    <name type="common">Pseudomonas mendocina</name>
    <dbReference type="NCBI Taxonomy" id="399739"/>
    <lineage>
        <taxon>Bacteria</taxon>
        <taxon>Pseudomonadati</taxon>
        <taxon>Pseudomonadota</taxon>
        <taxon>Gammaproteobacteria</taxon>
        <taxon>Pseudomonadales</taxon>
        <taxon>Pseudomonadaceae</taxon>
        <taxon>Ectopseudomonas</taxon>
    </lineage>
</organism>
<keyword id="KW-0067">ATP-binding</keyword>
<keyword id="KW-0963">Cytoplasm</keyword>
<keyword id="KW-0418">Kinase</keyword>
<keyword id="KW-0460">Magnesium</keyword>
<keyword id="KW-0479">Metal-binding</keyword>
<keyword id="KW-0546">Nucleotide metabolism</keyword>
<keyword id="KW-0547">Nucleotide-binding</keyword>
<keyword id="KW-0597">Phosphoprotein</keyword>
<keyword id="KW-0808">Transferase</keyword>
<sequence>MAVQRTFSIIKPDAVAKNVIGEITTRFEKAGLRVVASKMVQLSEREAAGFYAEHSERGFFKDLVAFMTSGPVIVQVLEGEDAVLKNRELMGATNPKEAAPGTIRADFAVSIDENAVHGSDSEASAAREIAYFFSATELCARIR</sequence>
<proteinExistence type="inferred from homology"/>
<reference key="1">
    <citation type="submission" date="2007-04" db="EMBL/GenBank/DDBJ databases">
        <title>Complete sequence of Pseudomonas mendocina ymp.</title>
        <authorList>
            <consortium name="US DOE Joint Genome Institute"/>
            <person name="Copeland A."/>
            <person name="Lucas S."/>
            <person name="Lapidus A."/>
            <person name="Barry K."/>
            <person name="Glavina del Rio T."/>
            <person name="Dalin E."/>
            <person name="Tice H."/>
            <person name="Pitluck S."/>
            <person name="Kiss H."/>
            <person name="Brettin T."/>
            <person name="Detter J.C."/>
            <person name="Bruce D."/>
            <person name="Han C."/>
            <person name="Schmutz J."/>
            <person name="Larimer F."/>
            <person name="Land M."/>
            <person name="Hauser L."/>
            <person name="Kyrpides N."/>
            <person name="Mikhailova N."/>
            <person name="Hersman L."/>
            <person name="Dubois J."/>
            <person name="Maurice P."/>
            <person name="Richardson P."/>
        </authorList>
    </citation>
    <scope>NUCLEOTIDE SEQUENCE [LARGE SCALE GENOMIC DNA]</scope>
    <source>
        <strain>ymp</strain>
    </source>
</reference>
<dbReference type="EC" id="2.7.4.6" evidence="1"/>
<dbReference type="EMBL" id="CP000680">
    <property type="protein sequence ID" value="ABP86252.1"/>
    <property type="molecule type" value="Genomic_DNA"/>
</dbReference>
<dbReference type="SMR" id="A4XY36"/>
<dbReference type="STRING" id="399739.Pmen_3504"/>
<dbReference type="KEGG" id="pmy:Pmen_3504"/>
<dbReference type="eggNOG" id="COG0105">
    <property type="taxonomic scope" value="Bacteria"/>
</dbReference>
<dbReference type="HOGENOM" id="CLU_060216_8_1_6"/>
<dbReference type="OrthoDB" id="9801161at2"/>
<dbReference type="GO" id="GO:0005737">
    <property type="term" value="C:cytoplasm"/>
    <property type="evidence" value="ECO:0007669"/>
    <property type="project" value="UniProtKB-SubCell"/>
</dbReference>
<dbReference type="GO" id="GO:0005524">
    <property type="term" value="F:ATP binding"/>
    <property type="evidence" value="ECO:0007669"/>
    <property type="project" value="UniProtKB-UniRule"/>
</dbReference>
<dbReference type="GO" id="GO:0046872">
    <property type="term" value="F:metal ion binding"/>
    <property type="evidence" value="ECO:0007669"/>
    <property type="project" value="UniProtKB-KW"/>
</dbReference>
<dbReference type="GO" id="GO:0004550">
    <property type="term" value="F:nucleoside diphosphate kinase activity"/>
    <property type="evidence" value="ECO:0007669"/>
    <property type="project" value="UniProtKB-UniRule"/>
</dbReference>
<dbReference type="GO" id="GO:0006241">
    <property type="term" value="P:CTP biosynthetic process"/>
    <property type="evidence" value="ECO:0007669"/>
    <property type="project" value="UniProtKB-UniRule"/>
</dbReference>
<dbReference type="GO" id="GO:0006183">
    <property type="term" value="P:GTP biosynthetic process"/>
    <property type="evidence" value="ECO:0007669"/>
    <property type="project" value="UniProtKB-UniRule"/>
</dbReference>
<dbReference type="GO" id="GO:0006228">
    <property type="term" value="P:UTP biosynthetic process"/>
    <property type="evidence" value="ECO:0007669"/>
    <property type="project" value="UniProtKB-UniRule"/>
</dbReference>
<dbReference type="CDD" id="cd04413">
    <property type="entry name" value="NDPk_I"/>
    <property type="match status" value="1"/>
</dbReference>
<dbReference type="FunFam" id="3.30.70.141:FF:000001">
    <property type="entry name" value="Nucleoside diphosphate kinase"/>
    <property type="match status" value="1"/>
</dbReference>
<dbReference type="Gene3D" id="3.30.70.141">
    <property type="entry name" value="Nucleoside diphosphate kinase-like domain"/>
    <property type="match status" value="1"/>
</dbReference>
<dbReference type="HAMAP" id="MF_00451">
    <property type="entry name" value="NDP_kinase"/>
    <property type="match status" value="1"/>
</dbReference>
<dbReference type="InterPro" id="IPR034907">
    <property type="entry name" value="NDK-like_dom"/>
</dbReference>
<dbReference type="InterPro" id="IPR036850">
    <property type="entry name" value="NDK-like_dom_sf"/>
</dbReference>
<dbReference type="InterPro" id="IPR001564">
    <property type="entry name" value="Nucleoside_diP_kinase"/>
</dbReference>
<dbReference type="InterPro" id="IPR023005">
    <property type="entry name" value="Nucleoside_diP_kinase_AS"/>
</dbReference>
<dbReference type="NCBIfam" id="NF001908">
    <property type="entry name" value="PRK00668.1"/>
    <property type="match status" value="1"/>
</dbReference>
<dbReference type="PANTHER" id="PTHR46161">
    <property type="entry name" value="NUCLEOSIDE DIPHOSPHATE KINASE"/>
    <property type="match status" value="1"/>
</dbReference>
<dbReference type="PANTHER" id="PTHR46161:SF3">
    <property type="entry name" value="NUCLEOSIDE DIPHOSPHATE KINASE DDB_G0292928-RELATED"/>
    <property type="match status" value="1"/>
</dbReference>
<dbReference type="Pfam" id="PF00334">
    <property type="entry name" value="NDK"/>
    <property type="match status" value="1"/>
</dbReference>
<dbReference type="PRINTS" id="PR01243">
    <property type="entry name" value="NUCDPKINASE"/>
</dbReference>
<dbReference type="SMART" id="SM00562">
    <property type="entry name" value="NDK"/>
    <property type="match status" value="1"/>
</dbReference>
<dbReference type="SUPFAM" id="SSF54919">
    <property type="entry name" value="Nucleoside diphosphate kinase, NDK"/>
    <property type="match status" value="1"/>
</dbReference>
<dbReference type="PROSITE" id="PS00469">
    <property type="entry name" value="NDPK"/>
    <property type="match status" value="1"/>
</dbReference>
<dbReference type="PROSITE" id="PS51374">
    <property type="entry name" value="NDPK_LIKE"/>
    <property type="match status" value="1"/>
</dbReference>
<name>NDK_ECTM1</name>
<feature type="chain" id="PRO_1000026277" description="Nucleoside diphosphate kinase">
    <location>
        <begin position="1"/>
        <end position="143"/>
    </location>
</feature>
<feature type="active site" description="Pros-phosphohistidine intermediate" evidence="1">
    <location>
        <position position="117"/>
    </location>
</feature>
<feature type="binding site" evidence="1">
    <location>
        <position position="11"/>
    </location>
    <ligand>
        <name>ATP</name>
        <dbReference type="ChEBI" id="CHEBI:30616"/>
    </ligand>
</feature>
<feature type="binding site" evidence="1">
    <location>
        <position position="59"/>
    </location>
    <ligand>
        <name>ATP</name>
        <dbReference type="ChEBI" id="CHEBI:30616"/>
    </ligand>
</feature>
<feature type="binding site" evidence="1">
    <location>
        <position position="87"/>
    </location>
    <ligand>
        <name>ATP</name>
        <dbReference type="ChEBI" id="CHEBI:30616"/>
    </ligand>
</feature>
<feature type="binding site" evidence="1">
    <location>
        <position position="93"/>
    </location>
    <ligand>
        <name>ATP</name>
        <dbReference type="ChEBI" id="CHEBI:30616"/>
    </ligand>
</feature>
<feature type="binding site" evidence="1">
    <location>
        <position position="104"/>
    </location>
    <ligand>
        <name>ATP</name>
        <dbReference type="ChEBI" id="CHEBI:30616"/>
    </ligand>
</feature>
<feature type="binding site" evidence="1">
    <location>
        <position position="114"/>
    </location>
    <ligand>
        <name>ATP</name>
        <dbReference type="ChEBI" id="CHEBI:30616"/>
    </ligand>
</feature>
<comment type="function">
    <text evidence="1">Major role in the synthesis of nucleoside triphosphates other than ATP. The ATP gamma phosphate is transferred to the NDP beta phosphate via a ping-pong mechanism, using a phosphorylated active-site intermediate.</text>
</comment>
<comment type="catalytic activity">
    <reaction evidence="1">
        <text>a 2'-deoxyribonucleoside 5'-diphosphate + ATP = a 2'-deoxyribonucleoside 5'-triphosphate + ADP</text>
        <dbReference type="Rhea" id="RHEA:44640"/>
        <dbReference type="ChEBI" id="CHEBI:30616"/>
        <dbReference type="ChEBI" id="CHEBI:61560"/>
        <dbReference type="ChEBI" id="CHEBI:73316"/>
        <dbReference type="ChEBI" id="CHEBI:456216"/>
        <dbReference type="EC" id="2.7.4.6"/>
    </reaction>
</comment>
<comment type="catalytic activity">
    <reaction evidence="1">
        <text>a ribonucleoside 5'-diphosphate + ATP = a ribonucleoside 5'-triphosphate + ADP</text>
        <dbReference type="Rhea" id="RHEA:18113"/>
        <dbReference type="ChEBI" id="CHEBI:30616"/>
        <dbReference type="ChEBI" id="CHEBI:57930"/>
        <dbReference type="ChEBI" id="CHEBI:61557"/>
        <dbReference type="ChEBI" id="CHEBI:456216"/>
        <dbReference type="EC" id="2.7.4.6"/>
    </reaction>
</comment>
<comment type="cofactor">
    <cofactor evidence="1">
        <name>Mg(2+)</name>
        <dbReference type="ChEBI" id="CHEBI:18420"/>
    </cofactor>
</comment>
<comment type="subunit">
    <text evidence="1">Homotetramer.</text>
</comment>
<comment type="subcellular location">
    <subcellularLocation>
        <location evidence="1">Cytoplasm</location>
    </subcellularLocation>
</comment>
<comment type="similarity">
    <text evidence="1">Belongs to the NDK family.</text>
</comment>
<accession>A4XY36</accession>
<protein>
    <recommendedName>
        <fullName evidence="1">Nucleoside diphosphate kinase</fullName>
        <shortName evidence="1">NDK</shortName>
        <shortName evidence="1">NDP kinase</shortName>
        <ecNumber evidence="1">2.7.4.6</ecNumber>
    </recommendedName>
    <alternativeName>
        <fullName evidence="1">Nucleoside-2-P kinase</fullName>
    </alternativeName>
</protein>
<gene>
    <name evidence="1" type="primary">ndk</name>
    <name type="ordered locus">Pmen_3504</name>
</gene>
<evidence type="ECO:0000255" key="1">
    <source>
        <dbReference type="HAMAP-Rule" id="MF_00451"/>
    </source>
</evidence>